<accession>P69063</accession>
<accession>P13153</accession>
<protein>
    <recommendedName>
        <fullName>Glycoprotein hormones alpha chain 2</fullName>
    </recommendedName>
    <alternativeName>
        <fullName>GTH-alpha</fullName>
    </alternativeName>
    <alternativeName>
        <fullName>Gonadotropin 2 alpha chain</fullName>
    </alternativeName>
</protein>
<keyword id="KW-1015">Disulfide bond</keyword>
<keyword id="KW-0325">Glycoprotein</keyword>
<keyword id="KW-0372">Hormone</keyword>
<keyword id="KW-0964">Secreted</keyword>
<keyword id="KW-0732">Signal</keyword>
<evidence type="ECO:0000250" key="1"/>
<evidence type="ECO:0000255" key="2"/>
<evidence type="ECO:0000305" key="3"/>
<proteinExistence type="inferred from homology"/>
<sequence length="114" mass="12538">MCLLKSTGLSLILSALLVIADSYPNSDKTNMGCEECTLKPNTIFPNIMQCTGCCFSRAYPTPLRSKQTMLVPKNITSEATCCVAKEGERVTTKDGFPVTNHTECHCSTCYYHKS</sequence>
<comment type="function">
    <text>Involved in gametogenesis and steroidogenesis.</text>
</comment>
<comment type="subunit">
    <text>Heterodimer of an alpha and a beta chain.</text>
</comment>
<comment type="subcellular location">
    <subcellularLocation>
        <location>Secreted</location>
    </subcellularLocation>
</comment>
<comment type="similarity">
    <text evidence="3">Belongs to the glycoprotein hormones subunit alpha family.</text>
</comment>
<reference key="1">
    <citation type="journal article" date="1988" name="Comp. Biochem. Physiol.">
        <title>Primary structure of two mRNAs encoding putative salmon alpha-subunits of pituitary glycoprotein hormone.</title>
        <authorList>
            <person name="Kitahara N."/>
            <person name="Nishizawa T."/>
            <person name="Gatanaga T."/>
            <person name="Okazaki H."/>
            <person name="Andoh T."/>
            <person name="Soma G."/>
        </authorList>
    </citation>
    <scope>NUCLEOTIDE SEQUENCE [MRNA]</scope>
</reference>
<reference key="2">
    <citation type="journal article" date="1989" name="Proc. Natl. Acad. Sci. U.S.A.">
        <title>Molecular cloning and sequence analysis of chum salmon gonadotropin cDNAs.</title>
        <authorList>
            <person name="Sekine S."/>
            <person name="Saito A."/>
            <person name="Itoh H."/>
            <person name="Kawauchi H."/>
            <person name="Itoh S."/>
        </authorList>
    </citation>
    <scope>NUCLEOTIDE SEQUENCE [MRNA]</scope>
</reference>
<name>GLHA2_ONCKE</name>
<organism>
    <name type="scientific">Oncorhynchus keta</name>
    <name type="common">Chum salmon</name>
    <name type="synonym">Salmo keta</name>
    <dbReference type="NCBI Taxonomy" id="8018"/>
    <lineage>
        <taxon>Eukaryota</taxon>
        <taxon>Metazoa</taxon>
        <taxon>Chordata</taxon>
        <taxon>Craniata</taxon>
        <taxon>Vertebrata</taxon>
        <taxon>Euteleostomi</taxon>
        <taxon>Actinopterygii</taxon>
        <taxon>Neopterygii</taxon>
        <taxon>Teleostei</taxon>
        <taxon>Protacanthopterygii</taxon>
        <taxon>Salmoniformes</taxon>
        <taxon>Salmonidae</taxon>
        <taxon>Salmoninae</taxon>
        <taxon>Oncorhynchus</taxon>
    </lineage>
</organism>
<gene>
    <name type="primary">cgab</name>
</gene>
<dbReference type="EMBL" id="M27653">
    <property type="protein sequence ID" value="AAA49405.1"/>
    <property type="molecule type" value="mRNA"/>
</dbReference>
<dbReference type="EMBL" id="M27152">
    <property type="protein sequence ID" value="AAA49407.1"/>
    <property type="molecule type" value="mRNA"/>
</dbReference>
<dbReference type="PIR" id="JL0069">
    <property type="entry name" value="B60627"/>
</dbReference>
<dbReference type="SMR" id="P69063"/>
<dbReference type="GlyCosmos" id="P69063">
    <property type="glycosylation" value="2 sites, No reported glycans"/>
</dbReference>
<dbReference type="GO" id="GO:0005615">
    <property type="term" value="C:extracellular space"/>
    <property type="evidence" value="ECO:0007669"/>
    <property type="project" value="TreeGrafter"/>
</dbReference>
<dbReference type="GO" id="GO:0016914">
    <property type="term" value="C:follicle-stimulating hormone complex"/>
    <property type="evidence" value="ECO:0007669"/>
    <property type="project" value="TreeGrafter"/>
</dbReference>
<dbReference type="GO" id="GO:0016913">
    <property type="term" value="F:follicle-stimulating hormone activity"/>
    <property type="evidence" value="ECO:0007669"/>
    <property type="project" value="TreeGrafter"/>
</dbReference>
<dbReference type="GO" id="GO:0010893">
    <property type="term" value="P:positive regulation of steroid biosynthetic process"/>
    <property type="evidence" value="ECO:0007669"/>
    <property type="project" value="TreeGrafter"/>
</dbReference>
<dbReference type="GO" id="GO:0006590">
    <property type="term" value="P:thyroid hormone generation"/>
    <property type="evidence" value="ECO:0007669"/>
    <property type="project" value="TreeGrafter"/>
</dbReference>
<dbReference type="FunFam" id="2.10.90.10:FF:000011">
    <property type="entry name" value="Glycoprotein hormones alpha chain"/>
    <property type="match status" value="1"/>
</dbReference>
<dbReference type="Gene3D" id="2.10.90.10">
    <property type="entry name" value="Cystine-knot cytokines"/>
    <property type="match status" value="1"/>
</dbReference>
<dbReference type="InterPro" id="IPR029034">
    <property type="entry name" value="Cystine-knot_cytokine"/>
</dbReference>
<dbReference type="InterPro" id="IPR000476">
    <property type="entry name" value="Glyco_hormone"/>
</dbReference>
<dbReference type="PANTHER" id="PTHR11509">
    <property type="entry name" value="GLYCOPROTEIN HORMONE ALPHA CHAIN"/>
    <property type="match status" value="1"/>
</dbReference>
<dbReference type="PANTHER" id="PTHR11509:SF0">
    <property type="entry name" value="GLYCOPROTEIN HORMONES ALPHA CHAIN"/>
    <property type="match status" value="1"/>
</dbReference>
<dbReference type="Pfam" id="PF00236">
    <property type="entry name" value="Hormone_6"/>
    <property type="match status" value="1"/>
</dbReference>
<dbReference type="PRINTS" id="PR00274">
    <property type="entry name" value="GLYCOHORMONE"/>
</dbReference>
<dbReference type="SMART" id="SM00067">
    <property type="entry name" value="GHA"/>
    <property type="match status" value="1"/>
</dbReference>
<dbReference type="SUPFAM" id="SSF57501">
    <property type="entry name" value="Cystine-knot cytokines"/>
    <property type="match status" value="1"/>
</dbReference>
<dbReference type="PROSITE" id="PS00779">
    <property type="entry name" value="GLYCO_HORMONE_ALPHA_1"/>
    <property type="match status" value="1"/>
</dbReference>
<dbReference type="PROSITE" id="PS00780">
    <property type="entry name" value="GLYCO_HORMONE_ALPHA_2"/>
    <property type="match status" value="1"/>
</dbReference>
<dbReference type="PROSITE" id="PS50277">
    <property type="entry name" value="GLYCO_HORMONE_ALPHA_3"/>
    <property type="match status" value="1"/>
</dbReference>
<feature type="signal peptide">
    <location>
        <begin position="1"/>
        <end position="22"/>
    </location>
</feature>
<feature type="chain" id="PRO_0000011670" description="Glycoprotein hormones alpha chain 2">
    <location>
        <begin position="23"/>
        <end position="114"/>
    </location>
</feature>
<feature type="glycosylation site" description="N-linked (GlcNAc...) asparagine" evidence="2">
    <location>
        <position position="74"/>
    </location>
</feature>
<feature type="glycosylation site" description="N-linked (GlcNAc...) asparagine" evidence="2">
    <location>
        <position position="100"/>
    </location>
</feature>
<feature type="disulfide bond" evidence="1">
    <location>
        <begin position="33"/>
        <end position="53"/>
    </location>
</feature>
<feature type="disulfide bond" evidence="1">
    <location>
        <begin position="36"/>
        <end position="82"/>
    </location>
</feature>
<feature type="disulfide bond" evidence="1">
    <location>
        <begin position="50"/>
        <end position="104"/>
    </location>
</feature>
<feature type="disulfide bond" evidence="1">
    <location>
        <begin position="54"/>
        <end position="106"/>
    </location>
</feature>
<feature type="disulfide bond" evidence="1">
    <location>
        <begin position="81"/>
        <end position="109"/>
    </location>
</feature>